<proteinExistence type="inferred from homology"/>
<comment type="function">
    <text evidence="1">Catalyzes the synthesis of GMP from XMP.</text>
</comment>
<comment type="catalytic activity">
    <reaction evidence="1">
        <text>XMP + L-glutamine + ATP + H2O = GMP + L-glutamate + AMP + diphosphate + 2 H(+)</text>
        <dbReference type="Rhea" id="RHEA:11680"/>
        <dbReference type="ChEBI" id="CHEBI:15377"/>
        <dbReference type="ChEBI" id="CHEBI:15378"/>
        <dbReference type="ChEBI" id="CHEBI:29985"/>
        <dbReference type="ChEBI" id="CHEBI:30616"/>
        <dbReference type="ChEBI" id="CHEBI:33019"/>
        <dbReference type="ChEBI" id="CHEBI:57464"/>
        <dbReference type="ChEBI" id="CHEBI:58115"/>
        <dbReference type="ChEBI" id="CHEBI:58359"/>
        <dbReference type="ChEBI" id="CHEBI:456215"/>
        <dbReference type="EC" id="6.3.5.2"/>
    </reaction>
</comment>
<comment type="pathway">
    <text evidence="1">Purine metabolism; GMP biosynthesis; GMP from XMP (L-Gln route): step 1/1.</text>
</comment>
<comment type="subunit">
    <text evidence="1">Homodimer.</text>
</comment>
<organism>
    <name type="scientific">Corynebacterium efficiens (strain DSM 44549 / YS-314 / AJ 12310 / JCM 11189 / NBRC 100395)</name>
    <dbReference type="NCBI Taxonomy" id="196164"/>
    <lineage>
        <taxon>Bacteria</taxon>
        <taxon>Bacillati</taxon>
        <taxon>Actinomycetota</taxon>
        <taxon>Actinomycetes</taxon>
        <taxon>Mycobacteriales</taxon>
        <taxon>Corynebacteriaceae</taxon>
        <taxon>Corynebacterium</taxon>
    </lineage>
</organism>
<accession>Q8FRZ3</accession>
<keyword id="KW-0067">ATP-binding</keyword>
<keyword id="KW-0315">Glutamine amidotransferase</keyword>
<keyword id="KW-0332">GMP biosynthesis</keyword>
<keyword id="KW-0436">Ligase</keyword>
<keyword id="KW-0547">Nucleotide-binding</keyword>
<keyword id="KW-0658">Purine biosynthesis</keyword>
<keyword id="KW-1185">Reference proteome</keyword>
<sequence length="523" mass="56154">MSLTPNHRPVLVVDYGAQYAQLIARRVREAGIYSEVIPHTATPQEIQEKNPVALVLSGGPSSVYAEDAPGIDPDILKLGLPVFGICYGFQAMTHALGGKVAATGKREYGRTDLEVKGGVLHDGLELSHKVWMSHGDAVSEAPEGFTVTASSEAAPVAAFENVEAKMAGVQYHPEVLHSPHGQQVLTRFLTEIAGLEQNWTAANIAEELVEKIREQVGPEGRAICGLSGGVDSAVAAALVQRAIGDRLTCVFVDHGLLRAGEREQVEKDFVAATGAKLVTVDERKAFLDKLAGVTEPEAKRKAIGAEFIRSFERAVAGVLEDSPEGSTVDFLVQGTLYPDVVESGGGAGTANIKSHHNVGGLPDDVEFELVEPLRLLFKDEVRAVGRELGLPEVIVARQPFPGPGLGIRIIGEVTEERLETLRHADLIARTELTAAGLDGIIWQCPVVLLADVRSVGVQGDGRTYGHPIVLRPVSSEDAMTADWTRLPYEVLERISTRITNEVADVNRVVLDVTSKPPGTIEWE</sequence>
<reference key="1">
    <citation type="journal article" date="2003" name="Genome Res.">
        <title>Comparative complete genome sequence analysis of the amino acid replacements responsible for the thermostability of Corynebacterium efficiens.</title>
        <authorList>
            <person name="Nishio Y."/>
            <person name="Nakamura Y."/>
            <person name="Kawarabayasi Y."/>
            <person name="Usuda Y."/>
            <person name="Kimura E."/>
            <person name="Sugimoto S."/>
            <person name="Matsui K."/>
            <person name="Yamagishi A."/>
            <person name="Kikuchi H."/>
            <person name="Ikeo K."/>
            <person name="Gojobori T."/>
        </authorList>
    </citation>
    <scope>NUCLEOTIDE SEQUENCE [LARGE SCALE GENOMIC DNA]</scope>
    <source>
        <strain>DSM 44549 / YS-314 / AJ 12310 / JCM 11189 / NBRC 100395</strain>
    </source>
</reference>
<feature type="chain" id="PRO_0000140118" description="GMP synthase [glutamine-hydrolyzing]">
    <location>
        <begin position="1"/>
        <end position="523"/>
    </location>
</feature>
<feature type="domain" description="Glutamine amidotransferase type-1" evidence="1">
    <location>
        <begin position="9"/>
        <end position="198"/>
    </location>
</feature>
<feature type="domain" description="GMPS ATP-PPase" evidence="1">
    <location>
        <begin position="199"/>
        <end position="397"/>
    </location>
</feature>
<feature type="active site" description="Nucleophile" evidence="1">
    <location>
        <position position="86"/>
    </location>
</feature>
<feature type="active site" evidence="1">
    <location>
        <position position="172"/>
    </location>
</feature>
<feature type="active site" evidence="1">
    <location>
        <position position="174"/>
    </location>
</feature>
<feature type="binding site" evidence="1">
    <location>
        <begin position="227"/>
        <end position="233"/>
    </location>
    <ligand>
        <name>ATP</name>
        <dbReference type="ChEBI" id="CHEBI:30616"/>
    </ligand>
</feature>
<dbReference type="EC" id="6.3.5.2" evidence="1"/>
<dbReference type="EMBL" id="BA000035">
    <property type="protein sequence ID" value="BAC17425.1"/>
    <property type="molecule type" value="Genomic_DNA"/>
</dbReference>
<dbReference type="RefSeq" id="WP_011075070.1">
    <property type="nucleotide sequence ID" value="NC_004369.1"/>
</dbReference>
<dbReference type="SMR" id="Q8FRZ3"/>
<dbReference type="STRING" id="196164.gene:10741017"/>
<dbReference type="MEROPS" id="C26.957"/>
<dbReference type="KEGG" id="cef:CE0615"/>
<dbReference type="eggNOG" id="COG0518">
    <property type="taxonomic scope" value="Bacteria"/>
</dbReference>
<dbReference type="eggNOG" id="COG0519">
    <property type="taxonomic scope" value="Bacteria"/>
</dbReference>
<dbReference type="HOGENOM" id="CLU_014340_0_5_11"/>
<dbReference type="OrthoDB" id="9802219at2"/>
<dbReference type="UniPathway" id="UPA00189">
    <property type="reaction ID" value="UER00296"/>
</dbReference>
<dbReference type="Proteomes" id="UP000001409">
    <property type="component" value="Chromosome"/>
</dbReference>
<dbReference type="GO" id="GO:0005829">
    <property type="term" value="C:cytosol"/>
    <property type="evidence" value="ECO:0007669"/>
    <property type="project" value="TreeGrafter"/>
</dbReference>
<dbReference type="GO" id="GO:0005524">
    <property type="term" value="F:ATP binding"/>
    <property type="evidence" value="ECO:0007669"/>
    <property type="project" value="UniProtKB-UniRule"/>
</dbReference>
<dbReference type="GO" id="GO:0003921">
    <property type="term" value="F:GMP synthase activity"/>
    <property type="evidence" value="ECO:0007669"/>
    <property type="project" value="InterPro"/>
</dbReference>
<dbReference type="CDD" id="cd01742">
    <property type="entry name" value="GATase1_GMP_Synthase"/>
    <property type="match status" value="1"/>
</dbReference>
<dbReference type="CDD" id="cd01997">
    <property type="entry name" value="GMP_synthase_C"/>
    <property type="match status" value="1"/>
</dbReference>
<dbReference type="FunFam" id="3.30.300.10:FF:000002">
    <property type="entry name" value="GMP synthase [glutamine-hydrolyzing]"/>
    <property type="match status" value="1"/>
</dbReference>
<dbReference type="FunFam" id="3.40.50.620:FF:000001">
    <property type="entry name" value="GMP synthase [glutamine-hydrolyzing]"/>
    <property type="match status" value="1"/>
</dbReference>
<dbReference type="FunFam" id="3.40.50.880:FF:000001">
    <property type="entry name" value="GMP synthase [glutamine-hydrolyzing]"/>
    <property type="match status" value="1"/>
</dbReference>
<dbReference type="Gene3D" id="3.30.300.10">
    <property type="match status" value="1"/>
</dbReference>
<dbReference type="Gene3D" id="3.40.50.880">
    <property type="match status" value="1"/>
</dbReference>
<dbReference type="Gene3D" id="3.40.50.620">
    <property type="entry name" value="HUPs"/>
    <property type="match status" value="1"/>
</dbReference>
<dbReference type="HAMAP" id="MF_00344">
    <property type="entry name" value="GMP_synthase"/>
    <property type="match status" value="1"/>
</dbReference>
<dbReference type="InterPro" id="IPR029062">
    <property type="entry name" value="Class_I_gatase-like"/>
</dbReference>
<dbReference type="InterPro" id="IPR017926">
    <property type="entry name" value="GATASE"/>
</dbReference>
<dbReference type="InterPro" id="IPR001674">
    <property type="entry name" value="GMP_synth_C"/>
</dbReference>
<dbReference type="InterPro" id="IPR004739">
    <property type="entry name" value="GMP_synth_GATase"/>
</dbReference>
<dbReference type="InterPro" id="IPR022955">
    <property type="entry name" value="GMP_synthase"/>
</dbReference>
<dbReference type="InterPro" id="IPR025777">
    <property type="entry name" value="GMPS_ATP_PPase_dom"/>
</dbReference>
<dbReference type="InterPro" id="IPR022310">
    <property type="entry name" value="NAD/GMP_synthase"/>
</dbReference>
<dbReference type="InterPro" id="IPR014729">
    <property type="entry name" value="Rossmann-like_a/b/a_fold"/>
</dbReference>
<dbReference type="NCBIfam" id="TIGR00884">
    <property type="entry name" value="guaA_Cterm"/>
    <property type="match status" value="1"/>
</dbReference>
<dbReference type="NCBIfam" id="TIGR00888">
    <property type="entry name" value="guaA_Nterm"/>
    <property type="match status" value="1"/>
</dbReference>
<dbReference type="NCBIfam" id="NF000848">
    <property type="entry name" value="PRK00074.1"/>
    <property type="match status" value="1"/>
</dbReference>
<dbReference type="PANTHER" id="PTHR11922:SF2">
    <property type="entry name" value="GMP SYNTHASE [GLUTAMINE-HYDROLYZING]"/>
    <property type="match status" value="1"/>
</dbReference>
<dbReference type="PANTHER" id="PTHR11922">
    <property type="entry name" value="GMP SYNTHASE-RELATED"/>
    <property type="match status" value="1"/>
</dbReference>
<dbReference type="Pfam" id="PF00117">
    <property type="entry name" value="GATase"/>
    <property type="match status" value="1"/>
</dbReference>
<dbReference type="Pfam" id="PF00958">
    <property type="entry name" value="GMP_synt_C"/>
    <property type="match status" value="1"/>
</dbReference>
<dbReference type="Pfam" id="PF02540">
    <property type="entry name" value="NAD_synthase"/>
    <property type="match status" value="1"/>
</dbReference>
<dbReference type="PRINTS" id="PR00097">
    <property type="entry name" value="ANTSNTHASEII"/>
</dbReference>
<dbReference type="PRINTS" id="PR00099">
    <property type="entry name" value="CPSGATASE"/>
</dbReference>
<dbReference type="PRINTS" id="PR00096">
    <property type="entry name" value="GATASE"/>
</dbReference>
<dbReference type="SUPFAM" id="SSF52402">
    <property type="entry name" value="Adenine nucleotide alpha hydrolases-like"/>
    <property type="match status" value="1"/>
</dbReference>
<dbReference type="SUPFAM" id="SSF52317">
    <property type="entry name" value="Class I glutamine amidotransferase-like"/>
    <property type="match status" value="1"/>
</dbReference>
<dbReference type="SUPFAM" id="SSF54810">
    <property type="entry name" value="GMP synthetase C-terminal dimerisation domain"/>
    <property type="match status" value="1"/>
</dbReference>
<dbReference type="PROSITE" id="PS51273">
    <property type="entry name" value="GATASE_TYPE_1"/>
    <property type="match status" value="1"/>
</dbReference>
<dbReference type="PROSITE" id="PS51553">
    <property type="entry name" value="GMPS_ATP_PPASE"/>
    <property type="match status" value="1"/>
</dbReference>
<evidence type="ECO:0000255" key="1">
    <source>
        <dbReference type="HAMAP-Rule" id="MF_00344"/>
    </source>
</evidence>
<protein>
    <recommendedName>
        <fullName evidence="1">GMP synthase [glutamine-hydrolyzing]</fullName>
        <ecNumber evidence="1">6.3.5.2</ecNumber>
    </recommendedName>
    <alternativeName>
        <fullName evidence="1">GMP synthetase</fullName>
    </alternativeName>
    <alternativeName>
        <fullName evidence="1">Glutamine amidotransferase</fullName>
    </alternativeName>
</protein>
<name>GUAA_COREF</name>
<gene>
    <name evidence="1" type="primary">guaA</name>
    <name type="ordered locus">CE0615</name>
</gene>